<keyword id="KW-1048">Host nucleus</keyword>
<keyword id="KW-1185">Reference proteome</keyword>
<keyword id="KW-0231">Viral genome packaging</keyword>
<keyword id="KW-1188">Viral release from host cell</keyword>
<keyword id="KW-0946">Virion</keyword>
<organismHost>
    <name type="scientific">Homo sapiens</name>
    <name type="common">Human</name>
    <dbReference type="NCBI Taxonomy" id="9606"/>
</organismHost>
<reference key="1">
    <citation type="journal article" date="2006" name="Virology">
        <title>The genome of Epstein-Barr virus type 2 strain AG876.</title>
        <authorList>
            <person name="Dolan A."/>
            <person name="Addison C."/>
            <person name="Gatherer D."/>
            <person name="Davison A.J."/>
            <person name="McGeoch D.J."/>
        </authorList>
    </citation>
    <scope>NUCLEOTIDE SEQUENCE [LARGE SCALE GENOMIC DNA]</scope>
</reference>
<protein>
    <recommendedName>
        <fullName evidence="1">Portal protein</fullName>
    </recommendedName>
</protein>
<sequence length="613" mass="68356">MFNMNVDESASGALGSSAIPVHPTPASVRLFEILQGKYAYVQGQTIYANLRNPGVFSRQVFTHLFKRAISHCTYDDVLHDWNKFEACIQKRWPSDDSCASRFRESTFESWSTTMKLTVRDLLTTNIYRVLHSRSVLSYERYVDWICATGMVPAVKKPITQELHSKIKSLRDRCVCRELGHERTIRSIGTELYEATREIIESLNSTFIPQFTEVTIEYLPGSDEYVAYYCGRRIRLHVLFPPAIFAGTVTFDSPVQRLYQNIFMCYRTLEHAKICQLLNTAPLKAIVGHGGRDMYKDILAHLEQNSQRKDPKKELLNLLVKLSENKTISGVTDVVEEFITDASNNLVDRNRLFGQPGETAAQGLKKKVSNTVVKCLTDQINEQFDQINGLEKERELYLKKIRSMESQLQASLGPGGNNPAASAPAAVAAEAASVDILTGSTASAIEKLFNSPSASLGARVSGHNESILNSFVSQYIPPSREMTKDLTELWESELFNTFKLTPVVDNQGQRLYVRYSSDTISILLGPFTYLVAELSPVELVTDVYATLGIVEIIDELYRSSRLAIYIEDLGRKYCPASATGGDHGIRQAPSARGDAEPDHAKSKPARDPPPGAGS</sequence>
<name>PORTL_EBVA8</name>
<proteinExistence type="inferred from homology"/>
<accession>Q1HVF2</accession>
<feature type="chain" id="PRO_0000375974" description="Portal protein">
    <location>
        <begin position="1"/>
        <end position="613"/>
    </location>
</feature>
<feature type="region of interest" description="Disordered" evidence="2">
    <location>
        <begin position="577"/>
        <end position="613"/>
    </location>
</feature>
<feature type="compositionally biased region" description="Basic and acidic residues" evidence="2">
    <location>
        <begin position="592"/>
        <end position="605"/>
    </location>
</feature>
<evidence type="ECO:0000255" key="1">
    <source>
        <dbReference type="HAMAP-Rule" id="MF_04012"/>
    </source>
</evidence>
<evidence type="ECO:0000256" key="2">
    <source>
        <dbReference type="SAM" id="MobiDB-lite"/>
    </source>
</evidence>
<comment type="function">
    <text evidence="1">Forms a portal in the viral capsid through which viral DNA is translocated during DNA packaging. Assembles as a dodecamer at a single fivefold axe of the T=16 icosahedric capsid. Binds to the molecular motor that translocates the viral DNA, termed terminase.</text>
</comment>
<comment type="subunit">
    <text evidence="1">Homododecamerizes. Interacts with terminase subunits TRM1 and TRM3.</text>
</comment>
<comment type="subcellular location">
    <subcellularLocation>
        <location evidence="1">Virion</location>
    </subcellularLocation>
    <subcellularLocation>
        <location evidence="1">Host nucleus</location>
    </subcellularLocation>
</comment>
<comment type="similarity">
    <text evidence="1">Belongs to the herpesviridae portal protein family.</text>
</comment>
<dbReference type="EMBL" id="DQ279927">
    <property type="protein sequence ID" value="ABB89256.1"/>
    <property type="molecule type" value="Genomic_DNA"/>
</dbReference>
<dbReference type="RefSeq" id="YP_001129476.1">
    <property type="nucleotide sequence ID" value="NC_009334.1"/>
</dbReference>
<dbReference type="SMR" id="Q1HVF2"/>
<dbReference type="KEGG" id="vg:5176175"/>
<dbReference type="Proteomes" id="UP000007639">
    <property type="component" value="Genome"/>
</dbReference>
<dbReference type="GO" id="GO:0042025">
    <property type="term" value="C:host cell nucleus"/>
    <property type="evidence" value="ECO:0007669"/>
    <property type="project" value="UniProtKB-SubCell"/>
</dbReference>
<dbReference type="GO" id="GO:0044423">
    <property type="term" value="C:virion component"/>
    <property type="evidence" value="ECO:0007669"/>
    <property type="project" value="UniProtKB-KW"/>
</dbReference>
<dbReference type="GO" id="GO:0051276">
    <property type="term" value="P:chromosome organization"/>
    <property type="evidence" value="ECO:0007669"/>
    <property type="project" value="InterPro"/>
</dbReference>
<dbReference type="HAMAP" id="MF_04012">
    <property type="entry name" value="HSV_PORTL"/>
    <property type="match status" value="1"/>
</dbReference>
<dbReference type="InterPro" id="IPR002660">
    <property type="entry name" value="Herpes_Portal"/>
</dbReference>
<dbReference type="Pfam" id="PF01763">
    <property type="entry name" value="Herpes_UL6"/>
    <property type="match status" value="1"/>
</dbReference>
<organism>
    <name type="scientific">Epstein-Barr virus (strain AG876)</name>
    <name type="common">HHV-4</name>
    <name type="synonym">Human herpesvirus 4</name>
    <dbReference type="NCBI Taxonomy" id="82830"/>
    <lineage>
        <taxon>Viruses</taxon>
        <taxon>Duplodnaviria</taxon>
        <taxon>Heunggongvirae</taxon>
        <taxon>Peploviricota</taxon>
        <taxon>Herviviricetes</taxon>
        <taxon>Herpesvirales</taxon>
        <taxon>Orthoherpesviridae</taxon>
        <taxon>Gammaherpesvirinae</taxon>
        <taxon>Lymphocryptovirus</taxon>
        <taxon>Lymphocryptovirus humangamma4</taxon>
        <taxon>Epstein-Barr virus (strain GD1)</taxon>
    </lineage>
</organism>
<gene>
    <name type="ORF">BBRF1</name>
</gene>